<keyword id="KW-1185">Reference proteome</keyword>
<keyword id="KW-0687">Ribonucleoprotein</keyword>
<keyword id="KW-0689">Ribosomal protein</keyword>
<reference key="1">
    <citation type="submission" date="2006-05" db="EMBL/GenBank/DDBJ databases">
        <title>Complete sequence of chromosome of Silicibacter sp. TM1040.</title>
        <authorList>
            <consortium name="US DOE Joint Genome Institute"/>
            <person name="Copeland A."/>
            <person name="Lucas S."/>
            <person name="Lapidus A."/>
            <person name="Barry K."/>
            <person name="Detter J.C."/>
            <person name="Glavina del Rio T."/>
            <person name="Hammon N."/>
            <person name="Israni S."/>
            <person name="Dalin E."/>
            <person name="Tice H."/>
            <person name="Pitluck S."/>
            <person name="Brettin T."/>
            <person name="Bruce D."/>
            <person name="Han C."/>
            <person name="Tapia R."/>
            <person name="Goodwin L."/>
            <person name="Thompson L.S."/>
            <person name="Gilna P."/>
            <person name="Schmutz J."/>
            <person name="Larimer F."/>
            <person name="Land M."/>
            <person name="Hauser L."/>
            <person name="Kyrpides N."/>
            <person name="Kim E."/>
            <person name="Belas R."/>
            <person name="Moran M.A."/>
            <person name="Buchan A."/>
            <person name="Gonzalez J.M."/>
            <person name="Schell M.A."/>
            <person name="Sun F."/>
            <person name="Richardson P."/>
        </authorList>
    </citation>
    <scope>NUCLEOTIDE SEQUENCE [LARGE SCALE GENOMIC DNA]</scope>
    <source>
        <strain>TM1040</strain>
    </source>
</reference>
<name>RL7_RUEST</name>
<protein>
    <recommendedName>
        <fullName evidence="1">Large ribosomal subunit protein bL12</fullName>
    </recommendedName>
    <alternativeName>
        <fullName evidence="2">50S ribosomal protein L7/L12</fullName>
    </alternativeName>
</protein>
<gene>
    <name evidence="1" type="primary">rplL</name>
    <name type="ordered locus">TM1040_0233</name>
</gene>
<dbReference type="EMBL" id="CP000377">
    <property type="protein sequence ID" value="ABF62966.1"/>
    <property type="molecule type" value="Genomic_DNA"/>
</dbReference>
<dbReference type="RefSeq" id="WP_011537598.1">
    <property type="nucleotide sequence ID" value="NC_008044.1"/>
</dbReference>
<dbReference type="SMR" id="Q1GK50"/>
<dbReference type="STRING" id="292414.TM1040_0233"/>
<dbReference type="KEGG" id="sit:TM1040_0233"/>
<dbReference type="eggNOG" id="COG0222">
    <property type="taxonomic scope" value="Bacteria"/>
</dbReference>
<dbReference type="HOGENOM" id="CLU_086499_3_0_5"/>
<dbReference type="OrthoDB" id="9811748at2"/>
<dbReference type="Proteomes" id="UP000000636">
    <property type="component" value="Chromosome"/>
</dbReference>
<dbReference type="GO" id="GO:0022625">
    <property type="term" value="C:cytosolic large ribosomal subunit"/>
    <property type="evidence" value="ECO:0007669"/>
    <property type="project" value="TreeGrafter"/>
</dbReference>
<dbReference type="GO" id="GO:0003729">
    <property type="term" value="F:mRNA binding"/>
    <property type="evidence" value="ECO:0007669"/>
    <property type="project" value="TreeGrafter"/>
</dbReference>
<dbReference type="GO" id="GO:0003735">
    <property type="term" value="F:structural constituent of ribosome"/>
    <property type="evidence" value="ECO:0007669"/>
    <property type="project" value="InterPro"/>
</dbReference>
<dbReference type="GO" id="GO:0006412">
    <property type="term" value="P:translation"/>
    <property type="evidence" value="ECO:0007669"/>
    <property type="project" value="UniProtKB-UniRule"/>
</dbReference>
<dbReference type="CDD" id="cd00387">
    <property type="entry name" value="Ribosomal_L7_L12"/>
    <property type="match status" value="1"/>
</dbReference>
<dbReference type="FunFam" id="3.30.1390.10:FF:000001">
    <property type="entry name" value="50S ribosomal protein L7/L12"/>
    <property type="match status" value="1"/>
</dbReference>
<dbReference type="Gene3D" id="3.30.1390.10">
    <property type="match status" value="1"/>
</dbReference>
<dbReference type="Gene3D" id="1.20.5.710">
    <property type="entry name" value="Single helix bin"/>
    <property type="match status" value="1"/>
</dbReference>
<dbReference type="HAMAP" id="MF_00368">
    <property type="entry name" value="Ribosomal_bL12"/>
    <property type="match status" value="1"/>
</dbReference>
<dbReference type="InterPro" id="IPR000206">
    <property type="entry name" value="Ribosomal_bL12"/>
</dbReference>
<dbReference type="InterPro" id="IPR013823">
    <property type="entry name" value="Ribosomal_bL12_C"/>
</dbReference>
<dbReference type="InterPro" id="IPR014719">
    <property type="entry name" value="Ribosomal_bL12_C/ClpS-like"/>
</dbReference>
<dbReference type="InterPro" id="IPR008932">
    <property type="entry name" value="Ribosomal_bL12_oligo"/>
</dbReference>
<dbReference type="InterPro" id="IPR036235">
    <property type="entry name" value="Ribosomal_bL12_oligo_N_sf"/>
</dbReference>
<dbReference type="NCBIfam" id="TIGR00855">
    <property type="entry name" value="L12"/>
    <property type="match status" value="1"/>
</dbReference>
<dbReference type="PANTHER" id="PTHR45987">
    <property type="entry name" value="39S RIBOSOMAL PROTEIN L12"/>
    <property type="match status" value="1"/>
</dbReference>
<dbReference type="PANTHER" id="PTHR45987:SF4">
    <property type="entry name" value="LARGE RIBOSOMAL SUBUNIT PROTEIN BL12M"/>
    <property type="match status" value="1"/>
</dbReference>
<dbReference type="Pfam" id="PF00542">
    <property type="entry name" value="Ribosomal_L12"/>
    <property type="match status" value="1"/>
</dbReference>
<dbReference type="Pfam" id="PF16320">
    <property type="entry name" value="Ribosomal_L12_N"/>
    <property type="match status" value="1"/>
</dbReference>
<dbReference type="SUPFAM" id="SSF54736">
    <property type="entry name" value="ClpS-like"/>
    <property type="match status" value="1"/>
</dbReference>
<dbReference type="SUPFAM" id="SSF48300">
    <property type="entry name" value="Ribosomal protein L7/12, oligomerisation (N-terminal) domain"/>
    <property type="match status" value="1"/>
</dbReference>
<proteinExistence type="inferred from homology"/>
<accession>Q1GK50</accession>
<feature type="chain" id="PRO_1000007091" description="Large ribosomal subunit protein bL12">
    <location>
        <begin position="1"/>
        <end position="125"/>
    </location>
</feature>
<sequence length="125" mass="12690">MADLKALAESIVGLTLLEAQELKTILKDEYGIEPAAGGAVMVAAGGDAAGGAAEEEKTEFDVVLKNAGASKINVIKEVRGITGLGLKEAKELVEAGGKIKEGVDKAEAEDIKGKLEAAGAEVELA</sequence>
<comment type="function">
    <text evidence="1">Forms part of the ribosomal stalk which helps the ribosome interact with GTP-bound translation factors. Is thus essential for accurate translation.</text>
</comment>
<comment type="subunit">
    <text evidence="1">Homodimer. Part of the ribosomal stalk of the 50S ribosomal subunit. Forms a multimeric L10(L12)X complex, where L10 forms an elongated spine to which 2 to 4 L12 dimers bind in a sequential fashion. Binds GTP-bound translation factors.</text>
</comment>
<comment type="similarity">
    <text evidence="1">Belongs to the bacterial ribosomal protein bL12 family.</text>
</comment>
<evidence type="ECO:0000255" key="1">
    <source>
        <dbReference type="HAMAP-Rule" id="MF_00368"/>
    </source>
</evidence>
<evidence type="ECO:0000305" key="2"/>
<organism>
    <name type="scientific">Ruegeria sp. (strain TM1040)</name>
    <name type="common">Silicibacter sp.</name>
    <dbReference type="NCBI Taxonomy" id="292414"/>
    <lineage>
        <taxon>Bacteria</taxon>
        <taxon>Pseudomonadati</taxon>
        <taxon>Pseudomonadota</taxon>
        <taxon>Alphaproteobacteria</taxon>
        <taxon>Rhodobacterales</taxon>
        <taxon>Roseobacteraceae</taxon>
        <taxon>Ruegeria</taxon>
    </lineage>
</organism>